<protein>
    <recommendedName>
        <fullName evidence="2">Small ribosomal subunit protein uS8</fullName>
    </recommendedName>
    <alternativeName>
        <fullName>40S ribosomal protein S15a</fullName>
    </alternativeName>
    <alternativeName>
        <fullName>Ribosomal protein S24</fullName>
    </alternativeName>
</protein>
<organism>
    <name type="scientific">Paracentrotus lividus</name>
    <name type="common">Common sea urchin</name>
    <dbReference type="NCBI Taxonomy" id="7656"/>
    <lineage>
        <taxon>Eukaryota</taxon>
        <taxon>Metazoa</taxon>
        <taxon>Echinodermata</taxon>
        <taxon>Eleutherozoa</taxon>
        <taxon>Echinozoa</taxon>
        <taxon>Echinoidea</taxon>
        <taxon>Euechinoidea</taxon>
        <taxon>Echinacea</taxon>
        <taxon>Camarodonta</taxon>
        <taxon>Echinidea</taxon>
        <taxon>Echinidae</taxon>
        <taxon>Paracentrotus</taxon>
    </lineage>
</organism>
<feature type="initiator methionine" description="Removed" evidence="1">
    <location>
        <position position="1"/>
    </location>
</feature>
<feature type="chain" id="PRO_0000126606" description="Small ribosomal subunit protein uS8">
    <location>
        <begin position="2"/>
        <end position="130"/>
    </location>
</feature>
<evidence type="ECO:0000250" key="1"/>
<evidence type="ECO:0000305" key="2"/>
<gene>
    <name type="primary">RPS15A</name>
</gene>
<keyword id="KW-0687">Ribonucleoprotein</keyword>
<keyword id="KW-0689">Ribosomal protein</keyword>
<proteinExistence type="evidence at transcript level"/>
<sequence length="130" mass="14751">MVRMNVLAAALRCICNAEKRCKRQVLIRPCSKVTIKFLMVMIKHGYIGEFEVVDDHRGGKIIVNLNGRLNKCGVISPRFDVPINDMEKWTSNLLPSRQFGYVVLTTSGGIMDHEEARRKHVGGKILGFFF</sequence>
<accession>P50891</accession>
<comment type="similarity">
    <text evidence="2">Belongs to the universal ribosomal protein uS8 family.</text>
</comment>
<dbReference type="EMBL" id="X95268">
    <property type="protein sequence ID" value="CAA64564.1"/>
    <property type="molecule type" value="mRNA"/>
</dbReference>
<dbReference type="PIR" id="JC4713">
    <property type="entry name" value="JC4713"/>
</dbReference>
<dbReference type="SMR" id="P50891"/>
<dbReference type="GO" id="GO:1990904">
    <property type="term" value="C:ribonucleoprotein complex"/>
    <property type="evidence" value="ECO:0007669"/>
    <property type="project" value="UniProtKB-KW"/>
</dbReference>
<dbReference type="GO" id="GO:0005840">
    <property type="term" value="C:ribosome"/>
    <property type="evidence" value="ECO:0007669"/>
    <property type="project" value="UniProtKB-KW"/>
</dbReference>
<dbReference type="GO" id="GO:0003735">
    <property type="term" value="F:structural constituent of ribosome"/>
    <property type="evidence" value="ECO:0007669"/>
    <property type="project" value="InterPro"/>
</dbReference>
<dbReference type="GO" id="GO:0006412">
    <property type="term" value="P:translation"/>
    <property type="evidence" value="ECO:0007669"/>
    <property type="project" value="InterPro"/>
</dbReference>
<dbReference type="FunFam" id="3.30.1370.30:FF:000001">
    <property type="entry name" value="40S ribosomal protein S15a"/>
    <property type="match status" value="1"/>
</dbReference>
<dbReference type="FunFam" id="3.30.1490.10:FF:000002">
    <property type="entry name" value="40S ribosomal protein S15a"/>
    <property type="match status" value="1"/>
</dbReference>
<dbReference type="Gene3D" id="3.30.1370.30">
    <property type="match status" value="1"/>
</dbReference>
<dbReference type="Gene3D" id="3.30.1490.10">
    <property type="match status" value="1"/>
</dbReference>
<dbReference type="InterPro" id="IPR000630">
    <property type="entry name" value="Ribosomal_uS8"/>
</dbReference>
<dbReference type="InterPro" id="IPR047863">
    <property type="entry name" value="Ribosomal_uS8_CS"/>
</dbReference>
<dbReference type="InterPro" id="IPR035987">
    <property type="entry name" value="Ribosomal_uS8_sf"/>
</dbReference>
<dbReference type="NCBIfam" id="NF003115">
    <property type="entry name" value="PRK04034.1"/>
    <property type="match status" value="1"/>
</dbReference>
<dbReference type="PANTHER" id="PTHR11758">
    <property type="entry name" value="40S RIBOSOMAL PROTEIN S15A"/>
    <property type="match status" value="1"/>
</dbReference>
<dbReference type="Pfam" id="PF00410">
    <property type="entry name" value="Ribosomal_S8"/>
    <property type="match status" value="1"/>
</dbReference>
<dbReference type="SUPFAM" id="SSF56047">
    <property type="entry name" value="Ribosomal protein S8"/>
    <property type="match status" value="1"/>
</dbReference>
<dbReference type="PROSITE" id="PS00053">
    <property type="entry name" value="RIBOSOMAL_S8"/>
    <property type="match status" value="1"/>
</dbReference>
<name>RS15A_PARLI</name>
<reference key="1">
    <citation type="journal article" date="1996" name="Biochem. Biophys. Res. Commun.">
        <title>cDNA sequence analysis and expression of the expression of the ribosomal protein S24 during oogenesis and embryonic development of the sea urchin Paracentrotus lividus.</title>
        <authorList>
            <person name="Sgroi A."/>
            <person name="Colombo P."/>
            <person name="Duro G."/>
            <person name="Fried M."/>
            <person name="Izzo V."/>
            <person name="Giudice G."/>
        </authorList>
    </citation>
    <scope>NUCLEOTIDE SEQUENCE [MRNA]</scope>
</reference>